<comment type="function">
    <text>Unknown. Required for development but not for cell death.</text>
</comment>
<comment type="subunit">
    <text evidence="7">Self-associates; the interaction is calcium-independent Interacts with pefa; the interaction is calcium-dependent. Interacts with pefb; the interaction is calcium-dependent.</text>
</comment>
<comment type="subcellular location">
    <subcellularLocation>
        <location evidence="5">Cytoplasm</location>
    </subcellularLocation>
    <subcellularLocation>
        <location evidence="5">Cytoplasmic vesicle membrane</location>
    </subcellularLocation>
    <subcellularLocation>
        <location evidence="5">Endosome</location>
    </subcellularLocation>
    <text>Colocalizes to large vesicle-like structures with chmp4. Colocalizes with vamp7A to endosomes but not to lysosomes.</text>
</comment>
<comment type="disruption phenotype">
    <text evidence="4 5 6">No obvious effect on unicellular growth but induces a premature development arrest, with an inability to differentiate spores and to build a true stalk indicative of a major defect in differentiation and morphogenesis. The abortive structure contains a mixture of undifferentiated cells and vacuolated stalk-like cells. Differing results include abnormal development only at very low extracellular Ca(2+) conditions (below 10 nM) (PubMed:15276209) or at alkaline pH (pH 9) (PubMed:15757670).</text>
</comment>
<proteinExistence type="evidence at protein level"/>
<gene>
    <name type="primary">alxA</name>
    <name type="synonym">alx</name>
    <name type="ORF">DDB_G0275451</name>
</gene>
<evidence type="ECO:0000255" key="1"/>
<evidence type="ECO:0000255" key="2">
    <source>
        <dbReference type="PROSITE-ProRule" id="PRU00526"/>
    </source>
</evidence>
<evidence type="ECO:0000256" key="3">
    <source>
        <dbReference type="SAM" id="MobiDB-lite"/>
    </source>
</evidence>
<evidence type="ECO:0000269" key="4">
    <source>
    </source>
</evidence>
<evidence type="ECO:0000269" key="5">
    <source>
    </source>
</evidence>
<evidence type="ECO:0000269" key="6">
    <source>
    </source>
</evidence>
<evidence type="ECO:0000269" key="7">
    <source>
    </source>
</evidence>
<accession>Q8T7K0</accession>
<accession>Q552W2</accession>
<reference key="1">
    <citation type="journal article" date="2005" name="Dev. Biol.">
        <title>Dd-Alix, a conserved endosome-associated protein, controls Dictyostelium development.</title>
        <authorList>
            <person name="Mattei S."/>
            <person name="Ryves W.J."/>
            <person name="Blot B."/>
            <person name="Sadoul R."/>
            <person name="Harwood A.J."/>
            <person name="Satre M."/>
            <person name="Klein G."/>
            <person name="Aubry L."/>
        </authorList>
    </citation>
    <scope>NUCLEOTIDE SEQUENCE [GENOMIC DNA]</scope>
    <scope>SUBCELLULAR LOCATION</scope>
    <scope>DISRUPTION PHENOTYPE</scope>
</reference>
<reference key="2">
    <citation type="journal article" date="2002" name="Nature">
        <title>Sequence and analysis of chromosome 2 of Dictyostelium discoideum.</title>
        <authorList>
            <person name="Gloeckner G."/>
            <person name="Eichinger L."/>
            <person name="Szafranski K."/>
            <person name="Pachebat J.A."/>
            <person name="Bankier A.T."/>
            <person name="Dear P.H."/>
            <person name="Lehmann R."/>
            <person name="Baumgart C."/>
            <person name="Parra G."/>
            <person name="Abril J.F."/>
            <person name="Guigo R."/>
            <person name="Kumpf K."/>
            <person name="Tunggal B."/>
            <person name="Cox E.C."/>
            <person name="Quail M.A."/>
            <person name="Platzer M."/>
            <person name="Rosenthal A."/>
            <person name="Noegel A.A."/>
        </authorList>
    </citation>
    <scope>NUCLEOTIDE SEQUENCE [LARGE SCALE GENOMIC DNA]</scope>
    <source>
        <strain>AX4</strain>
    </source>
</reference>
<reference key="3">
    <citation type="journal article" date="2005" name="Nature">
        <title>The genome of the social amoeba Dictyostelium discoideum.</title>
        <authorList>
            <person name="Eichinger L."/>
            <person name="Pachebat J.A."/>
            <person name="Gloeckner G."/>
            <person name="Rajandream M.A."/>
            <person name="Sucgang R."/>
            <person name="Berriman M."/>
            <person name="Song J."/>
            <person name="Olsen R."/>
            <person name="Szafranski K."/>
            <person name="Xu Q."/>
            <person name="Tunggal B."/>
            <person name="Kummerfeld S."/>
            <person name="Madera M."/>
            <person name="Konfortov B.A."/>
            <person name="Rivero F."/>
            <person name="Bankier A.T."/>
            <person name="Lehmann R."/>
            <person name="Hamlin N."/>
            <person name="Davies R."/>
            <person name="Gaudet P."/>
            <person name="Fey P."/>
            <person name="Pilcher K."/>
            <person name="Chen G."/>
            <person name="Saunders D."/>
            <person name="Sodergren E.J."/>
            <person name="Davis P."/>
            <person name="Kerhornou A."/>
            <person name="Nie X."/>
            <person name="Hall N."/>
            <person name="Anjard C."/>
            <person name="Hemphill L."/>
            <person name="Bason N."/>
            <person name="Farbrother P."/>
            <person name="Desany B."/>
            <person name="Just E."/>
            <person name="Morio T."/>
            <person name="Rost R."/>
            <person name="Churcher C.M."/>
            <person name="Cooper J."/>
            <person name="Haydock S."/>
            <person name="van Driessche N."/>
            <person name="Cronin A."/>
            <person name="Goodhead I."/>
            <person name="Muzny D.M."/>
            <person name="Mourier T."/>
            <person name="Pain A."/>
            <person name="Lu M."/>
            <person name="Harper D."/>
            <person name="Lindsay R."/>
            <person name="Hauser H."/>
            <person name="James K.D."/>
            <person name="Quiles M."/>
            <person name="Madan Babu M."/>
            <person name="Saito T."/>
            <person name="Buchrieser C."/>
            <person name="Wardroper A."/>
            <person name="Felder M."/>
            <person name="Thangavelu M."/>
            <person name="Johnson D."/>
            <person name="Knights A."/>
            <person name="Loulseged H."/>
            <person name="Mungall K.L."/>
            <person name="Oliver K."/>
            <person name="Price C."/>
            <person name="Quail M.A."/>
            <person name="Urushihara H."/>
            <person name="Hernandez J."/>
            <person name="Rabbinowitsch E."/>
            <person name="Steffen D."/>
            <person name="Sanders M."/>
            <person name="Ma J."/>
            <person name="Kohara Y."/>
            <person name="Sharp S."/>
            <person name="Simmonds M.N."/>
            <person name="Spiegler S."/>
            <person name="Tivey A."/>
            <person name="Sugano S."/>
            <person name="White B."/>
            <person name="Walker D."/>
            <person name="Woodward J.R."/>
            <person name="Winckler T."/>
            <person name="Tanaka Y."/>
            <person name="Shaulsky G."/>
            <person name="Schleicher M."/>
            <person name="Weinstock G.M."/>
            <person name="Rosenthal A."/>
            <person name="Cox E.C."/>
            <person name="Chisholm R.L."/>
            <person name="Gibbs R.A."/>
            <person name="Loomis W.F."/>
            <person name="Platzer M."/>
            <person name="Kay R.R."/>
            <person name="Williams J.G."/>
            <person name="Dear P.H."/>
            <person name="Noegel A.A."/>
            <person name="Barrell B.G."/>
            <person name="Kuspa A."/>
        </authorList>
    </citation>
    <scope>NUCLEOTIDE SEQUENCE [LARGE SCALE GENOMIC DNA]</scope>
    <source>
        <strain>AX4</strain>
    </source>
</reference>
<reference key="4">
    <citation type="journal article" date="2004" name="Gene">
        <title>DdAlix, an Alix/AIP1 homolog in Dictyostelium discoideum, is required for multicellular development under low Ca2+ conditions.</title>
        <authorList>
            <person name="Ohkouchi S."/>
            <person name="El-Halawany M.S."/>
            <person name="Aruga F."/>
            <person name="Shibata H."/>
            <person name="Hitomi K."/>
            <person name="Maki M."/>
        </authorList>
    </citation>
    <scope>DISRUPTION PHENOTYPE</scope>
</reference>
<reference key="5">
    <citation type="journal article" date="2005" name="FEBS Lett.">
        <title>Dictyostelium discoideum requires an Alix/AIP1 homolog, DdAlix, for morphogenesis in alkaline environments.</title>
        <authorList>
            <person name="Ohkouchi S."/>
            <person name="Saito H."/>
            <person name="Aruga F."/>
            <person name="Maeda T."/>
            <person name="Shibata H."/>
            <person name="Maki M."/>
        </authorList>
    </citation>
    <scope>DISRUPTION PHENOTYPE</scope>
</reference>
<reference key="6">
    <citation type="journal article" date="2006" name="Eur. J. Cell Biol.">
        <title>Trafficking and developmental signaling: Alix at the crossroads.</title>
        <authorList>
            <person name="Mattei S."/>
            <person name="Klein G."/>
            <person name="Satre M."/>
            <person name="Aubry L."/>
        </authorList>
    </citation>
    <scope>SELF-ASSOCIATION</scope>
    <scope>INTERACTION WITH PEFA AND PEFB</scope>
</reference>
<feature type="chain" id="PRO_0000375887" description="ALG-2 interacting protein X">
    <location>
        <begin position="1"/>
        <end position="794"/>
    </location>
</feature>
<feature type="domain" description="BRO1" evidence="2">
    <location>
        <begin position="1"/>
        <end position="385"/>
    </location>
</feature>
<feature type="region of interest" description="Disordered" evidence="3">
    <location>
        <begin position="695"/>
        <end position="794"/>
    </location>
</feature>
<feature type="coiled-coil region" evidence="1">
    <location>
        <begin position="499"/>
        <end position="568"/>
    </location>
</feature>
<feature type="coiled-coil region" evidence="1">
    <location>
        <begin position="600"/>
        <end position="655"/>
    </location>
</feature>
<feature type="compositionally biased region" description="Low complexity" evidence="3">
    <location>
        <begin position="698"/>
        <end position="712"/>
    </location>
</feature>
<feature type="compositionally biased region" description="Polar residues" evidence="3">
    <location>
        <begin position="713"/>
        <end position="722"/>
    </location>
</feature>
<feature type="compositionally biased region" description="Low complexity" evidence="3">
    <location>
        <begin position="723"/>
        <end position="742"/>
    </location>
</feature>
<feature type="compositionally biased region" description="Low complexity" evidence="3">
    <location>
        <begin position="749"/>
        <end position="764"/>
    </location>
</feature>
<feature type="compositionally biased region" description="Pro residues" evidence="3">
    <location>
        <begin position="765"/>
        <end position="787"/>
    </location>
</feature>
<organism>
    <name type="scientific">Dictyostelium discoideum</name>
    <name type="common">Social amoeba</name>
    <dbReference type="NCBI Taxonomy" id="44689"/>
    <lineage>
        <taxon>Eukaryota</taxon>
        <taxon>Amoebozoa</taxon>
        <taxon>Evosea</taxon>
        <taxon>Eumycetozoa</taxon>
        <taxon>Dictyostelia</taxon>
        <taxon>Dictyosteliales</taxon>
        <taxon>Dictyosteliaceae</taxon>
        <taxon>Dictyostelium</taxon>
    </lineage>
</organism>
<sequence length="794" mass="90526">MLSIERKRTEKVDFSKPLTKYIKEQFSKAESDQHETQIATLNGLREDVRNLQERTETSKEMVWKYYSILSSLELRFPISENNVRISFPWTDSYRQRKSTLYSIYFERASVLFNYGSIVSQIASSTNRSNIEGVKKACNQFQLAAGVFNKLREYASLHPECSTSADFSSESLQALVTIMLAQAQECIYEKASMDNLSDSILSKLAAQVAEYYDTFNQLLNSNSLKSIVDRNWNITATVKSYLYKAISLYCHAKGLEQVSQFGEQVSRLMIAVDNINQSKVNLAKTAPIELKEIVERYVISITRYCESAKKDNDTIYHDTIPPAHKLTPIEKKPLAKALPLPEINFVDPFNSLVPFSVKEDSAYYNDQKETLLRKELDNIEFHNQSAKASLLSMGLPGSIEALDVGVPVALKEKMNVVTNEQGVSNITRLLENIQQLSDEDSAICLSAGNLLKKEEDEDNLMRATYGAQWHRTPSYTLTANLTQDYAKYTSHLQHSTKSDSFIRKKFEDHKNSIQELENQTEIIALLPTNNLPSGKIAEIASLTVLMNDLDALMANRESIAEKLKNLCKKDDITLKLLSPQKDKSLIYAEEIQKYEPLQMSLNESFLKQQKLIEDIRKENEKFTNQKSKQGNQREEILQKYANAYKVYNELKANLDEGTQFYLNFQEILNKFLNRCKDFTTGRENEKIELKRQIEAGVNPHSPLTSPSPSLQSPVNNYPNQFSSPQYHTSPNQQQQQQQQYVPSSQPPPQYSYNPQPYQPPQQFGGPLPPPQSFSAPPPPQSFTAPPPYNSNNKHY</sequence>
<name>ALIX_DICDI</name>
<protein>
    <recommendedName>
        <fullName>ALG-2 interacting protein X</fullName>
        <shortName>Alix</shortName>
        <shortName>Dd-Alix</shortName>
        <shortName>DdAlix</shortName>
    </recommendedName>
</protein>
<keyword id="KW-0175">Coiled coil</keyword>
<keyword id="KW-0963">Cytoplasm</keyword>
<keyword id="KW-0968">Cytoplasmic vesicle</keyword>
<keyword id="KW-0967">Endosome</keyword>
<keyword id="KW-0472">Membrane</keyword>
<keyword id="KW-1185">Reference proteome</keyword>
<dbReference type="EMBL" id="AF360741">
    <property type="protein sequence ID" value="AAM00241.1"/>
    <property type="molecule type" value="Genomic_DNA"/>
</dbReference>
<dbReference type="EMBL" id="AAFI02000013">
    <property type="protein sequence ID" value="EAL69476.1"/>
    <property type="molecule type" value="Genomic_DNA"/>
</dbReference>
<dbReference type="RefSeq" id="XP_643566.1">
    <property type="nucleotide sequence ID" value="XM_638474.1"/>
</dbReference>
<dbReference type="SMR" id="Q8T7K0"/>
<dbReference type="FunCoup" id="Q8T7K0">
    <property type="interactions" value="1315"/>
</dbReference>
<dbReference type="STRING" id="44689.Q8T7K0"/>
<dbReference type="PaxDb" id="44689-DDB0185177"/>
<dbReference type="ABCD" id="Q8T7K0">
    <property type="antibodies" value="6 sequenced antibodies"/>
</dbReference>
<dbReference type="EnsemblProtists" id="EAL69476">
    <property type="protein sequence ID" value="EAL69476"/>
    <property type="gene ID" value="DDB_G0275451"/>
</dbReference>
<dbReference type="GeneID" id="8620152"/>
<dbReference type="KEGG" id="ddi:DDB_G0275451"/>
<dbReference type="dictyBase" id="DDB_G0275451">
    <property type="gene designation" value="alxA"/>
</dbReference>
<dbReference type="VEuPathDB" id="AmoebaDB:DDB_G0275451"/>
<dbReference type="eggNOG" id="KOG2220">
    <property type="taxonomic scope" value="Eukaryota"/>
</dbReference>
<dbReference type="HOGENOM" id="CLU_003661_0_0_1"/>
<dbReference type="InParanoid" id="Q8T7K0"/>
<dbReference type="OMA" id="VSHAEEM"/>
<dbReference type="PhylomeDB" id="Q8T7K0"/>
<dbReference type="PRO" id="PR:Q8T7K0"/>
<dbReference type="Proteomes" id="UP000002195">
    <property type="component" value="Chromosome 2"/>
</dbReference>
<dbReference type="GO" id="GO:0005737">
    <property type="term" value="C:cytoplasm"/>
    <property type="evidence" value="ECO:0000314"/>
    <property type="project" value="dictyBase"/>
</dbReference>
<dbReference type="GO" id="GO:0030659">
    <property type="term" value="C:cytoplasmic vesicle membrane"/>
    <property type="evidence" value="ECO:0007669"/>
    <property type="project" value="UniProtKB-SubCell"/>
</dbReference>
<dbReference type="GO" id="GO:0005768">
    <property type="term" value="C:endosome"/>
    <property type="evidence" value="ECO:0000314"/>
    <property type="project" value="dictyBase"/>
</dbReference>
<dbReference type="GO" id="GO:0009653">
    <property type="term" value="P:anatomical structure morphogenesis"/>
    <property type="evidence" value="ECO:0000315"/>
    <property type="project" value="dictyBase"/>
</dbReference>
<dbReference type="GO" id="GO:0019722">
    <property type="term" value="P:calcium-mediated signaling"/>
    <property type="evidence" value="ECO:0000315"/>
    <property type="project" value="dictyBase"/>
</dbReference>
<dbReference type="GO" id="GO:0031286">
    <property type="term" value="P:negative regulation of sorocarp stalk cell differentiation"/>
    <property type="evidence" value="ECO:0000315"/>
    <property type="project" value="dictyBase"/>
</dbReference>
<dbReference type="GO" id="GO:0045881">
    <property type="term" value="P:positive regulation of sporulation resulting in formation of a cellular spore"/>
    <property type="evidence" value="ECO:0000315"/>
    <property type="project" value="dictyBase"/>
</dbReference>
<dbReference type="GO" id="GO:0043328">
    <property type="term" value="P:protein transport to vacuole involved in ubiquitin-dependent protein catabolic process via the multivesicular body sorting pathway"/>
    <property type="evidence" value="ECO:0000318"/>
    <property type="project" value="GO_Central"/>
</dbReference>
<dbReference type="CDD" id="cd09246">
    <property type="entry name" value="BRO1_Alix_like_1"/>
    <property type="match status" value="1"/>
</dbReference>
<dbReference type="FunFam" id="1.25.40.280:FF:000001">
    <property type="entry name" value="programmed cell death 6-interacting protein-like isoform X1"/>
    <property type="match status" value="1"/>
</dbReference>
<dbReference type="Gene3D" id="1.20.120.560">
    <property type="entry name" value="alix/aip1 in complex with the ypdl late domain"/>
    <property type="match status" value="1"/>
</dbReference>
<dbReference type="Gene3D" id="1.20.140.50">
    <property type="entry name" value="alix/aip1 like domains"/>
    <property type="match status" value="1"/>
</dbReference>
<dbReference type="Gene3D" id="1.25.40.280">
    <property type="entry name" value="alix/aip1 like domains"/>
    <property type="match status" value="1"/>
</dbReference>
<dbReference type="InterPro" id="IPR025304">
    <property type="entry name" value="ALIX_V_dom"/>
</dbReference>
<dbReference type="InterPro" id="IPR004328">
    <property type="entry name" value="BRO1_dom"/>
</dbReference>
<dbReference type="InterPro" id="IPR038499">
    <property type="entry name" value="BRO1_sf"/>
</dbReference>
<dbReference type="PANTHER" id="PTHR23030">
    <property type="entry name" value="PCD6 INTERACTING PROTEIN-RELATED"/>
    <property type="match status" value="1"/>
</dbReference>
<dbReference type="PANTHER" id="PTHR23030:SF30">
    <property type="entry name" value="TYROSINE-PROTEIN PHOSPHATASE NON-RECEPTOR TYPE 23"/>
    <property type="match status" value="1"/>
</dbReference>
<dbReference type="Pfam" id="PF13949">
    <property type="entry name" value="ALIX_LYPXL_bnd"/>
    <property type="match status" value="1"/>
</dbReference>
<dbReference type="Pfam" id="PF03097">
    <property type="entry name" value="BRO1"/>
    <property type="match status" value="1"/>
</dbReference>
<dbReference type="SMART" id="SM01041">
    <property type="entry name" value="BRO1"/>
    <property type="match status" value="1"/>
</dbReference>
<dbReference type="PROSITE" id="PS51180">
    <property type="entry name" value="BRO1"/>
    <property type="match status" value="1"/>
</dbReference>